<gene>
    <name evidence="1" type="primary">tpiA</name>
    <name type="ordered locus">DIP1308</name>
</gene>
<feature type="chain" id="PRO_0000307453" description="Triosephosphate isomerase">
    <location>
        <begin position="1"/>
        <end position="260"/>
    </location>
</feature>
<feature type="active site" description="Electrophile" evidence="1">
    <location>
        <position position="100"/>
    </location>
</feature>
<feature type="active site" description="Proton acceptor" evidence="1">
    <location>
        <position position="172"/>
    </location>
</feature>
<feature type="binding site" evidence="1">
    <location>
        <begin position="10"/>
        <end position="12"/>
    </location>
    <ligand>
        <name>substrate</name>
    </ligand>
</feature>
<feature type="binding site" evidence="1">
    <location>
        <position position="178"/>
    </location>
    <ligand>
        <name>substrate</name>
    </ligand>
</feature>
<feature type="binding site" evidence="1">
    <location>
        <position position="218"/>
    </location>
    <ligand>
        <name>substrate</name>
    </ligand>
</feature>
<feature type="binding site" evidence="1">
    <location>
        <begin position="239"/>
        <end position="240"/>
    </location>
    <ligand>
        <name>substrate</name>
    </ligand>
</feature>
<accession>Q6NH37</accession>
<comment type="function">
    <text evidence="1">Involved in the gluconeogenesis. Catalyzes stereospecifically the conversion of dihydroxyacetone phosphate (DHAP) to D-glyceraldehyde-3-phosphate (G3P).</text>
</comment>
<comment type="catalytic activity">
    <reaction evidence="1">
        <text>D-glyceraldehyde 3-phosphate = dihydroxyacetone phosphate</text>
        <dbReference type="Rhea" id="RHEA:18585"/>
        <dbReference type="ChEBI" id="CHEBI:57642"/>
        <dbReference type="ChEBI" id="CHEBI:59776"/>
        <dbReference type="EC" id="5.3.1.1"/>
    </reaction>
</comment>
<comment type="pathway">
    <text evidence="1">Carbohydrate biosynthesis; gluconeogenesis.</text>
</comment>
<comment type="pathway">
    <text evidence="1">Carbohydrate degradation; glycolysis; D-glyceraldehyde 3-phosphate from glycerone phosphate: step 1/1.</text>
</comment>
<comment type="subunit">
    <text evidence="1">Homodimer.</text>
</comment>
<comment type="subcellular location">
    <subcellularLocation>
        <location evidence="1">Cytoplasm</location>
    </subcellularLocation>
</comment>
<comment type="similarity">
    <text evidence="1">Belongs to the triosephosphate isomerase family.</text>
</comment>
<reference key="1">
    <citation type="journal article" date="2003" name="Nucleic Acids Res.">
        <title>The complete genome sequence and analysis of Corynebacterium diphtheriae NCTC13129.</title>
        <authorList>
            <person name="Cerdeno-Tarraga A.-M."/>
            <person name="Efstratiou A."/>
            <person name="Dover L.G."/>
            <person name="Holden M.T.G."/>
            <person name="Pallen M.J."/>
            <person name="Bentley S.D."/>
            <person name="Besra G.S."/>
            <person name="Churcher C.M."/>
            <person name="James K.D."/>
            <person name="De Zoysa A."/>
            <person name="Chillingworth T."/>
            <person name="Cronin A."/>
            <person name="Dowd L."/>
            <person name="Feltwell T."/>
            <person name="Hamlin N."/>
            <person name="Holroyd S."/>
            <person name="Jagels K."/>
            <person name="Moule S."/>
            <person name="Quail M.A."/>
            <person name="Rabbinowitsch E."/>
            <person name="Rutherford K.M."/>
            <person name="Thomson N.R."/>
            <person name="Unwin L."/>
            <person name="Whitehead S."/>
            <person name="Barrell B.G."/>
            <person name="Parkhill J."/>
        </authorList>
    </citation>
    <scope>NUCLEOTIDE SEQUENCE [LARGE SCALE GENOMIC DNA]</scope>
    <source>
        <strain>ATCC 700971 / NCTC 13129 / Biotype gravis</strain>
    </source>
</reference>
<sequence>MARTPLIAGNWKMNLDHLQAVATVQKLAFALPKEYYEKVDVAVTVPFTDLRSVQTLIEGDKLAITYGAQDVSQHEAGAYTGEISAQMLAKLGCTWVVVGHSERREYHGESSELVAVKAKAALNQGISPIVCVGEPLEIREAGTHVEYVVEQTRASLAGLTADDLAKTVIAYEPVWAIGTGKVASAADAQEVCAAIRNLIIELAGKEVAEGLRILYGGSVKAETVAEIVGQPDVDGGLVGGASLDGEAFAKLAANAATVVD</sequence>
<protein>
    <recommendedName>
        <fullName evidence="1">Triosephosphate isomerase</fullName>
        <shortName evidence="1">TIM</shortName>
        <shortName evidence="1">TPI</shortName>
        <ecNumber evidence="1">5.3.1.1</ecNumber>
    </recommendedName>
    <alternativeName>
        <fullName evidence="1">Triose-phosphate isomerase</fullName>
    </alternativeName>
</protein>
<keyword id="KW-0963">Cytoplasm</keyword>
<keyword id="KW-0312">Gluconeogenesis</keyword>
<keyword id="KW-0324">Glycolysis</keyword>
<keyword id="KW-0413">Isomerase</keyword>
<keyword id="KW-1185">Reference proteome</keyword>
<organism>
    <name type="scientific">Corynebacterium diphtheriae (strain ATCC 700971 / NCTC 13129 / Biotype gravis)</name>
    <dbReference type="NCBI Taxonomy" id="257309"/>
    <lineage>
        <taxon>Bacteria</taxon>
        <taxon>Bacillati</taxon>
        <taxon>Actinomycetota</taxon>
        <taxon>Actinomycetes</taxon>
        <taxon>Mycobacteriales</taxon>
        <taxon>Corynebacteriaceae</taxon>
        <taxon>Corynebacterium</taxon>
    </lineage>
</organism>
<name>TPIS_CORDI</name>
<dbReference type="EC" id="5.3.1.1" evidence="1"/>
<dbReference type="EMBL" id="BX248357">
    <property type="protein sequence ID" value="CAE49836.1"/>
    <property type="molecule type" value="Genomic_DNA"/>
</dbReference>
<dbReference type="RefSeq" id="WP_010934971.1">
    <property type="nucleotide sequence ID" value="NC_002935.2"/>
</dbReference>
<dbReference type="SMR" id="Q6NH37"/>
<dbReference type="STRING" id="257309.DIP1308"/>
<dbReference type="KEGG" id="cdi:DIP1308"/>
<dbReference type="HOGENOM" id="CLU_024251_2_3_11"/>
<dbReference type="UniPathway" id="UPA00109">
    <property type="reaction ID" value="UER00189"/>
</dbReference>
<dbReference type="UniPathway" id="UPA00138"/>
<dbReference type="Proteomes" id="UP000002198">
    <property type="component" value="Chromosome"/>
</dbReference>
<dbReference type="GO" id="GO:0005829">
    <property type="term" value="C:cytosol"/>
    <property type="evidence" value="ECO:0007669"/>
    <property type="project" value="TreeGrafter"/>
</dbReference>
<dbReference type="GO" id="GO:0004807">
    <property type="term" value="F:triose-phosphate isomerase activity"/>
    <property type="evidence" value="ECO:0007669"/>
    <property type="project" value="UniProtKB-UniRule"/>
</dbReference>
<dbReference type="GO" id="GO:0006094">
    <property type="term" value="P:gluconeogenesis"/>
    <property type="evidence" value="ECO:0007669"/>
    <property type="project" value="UniProtKB-UniRule"/>
</dbReference>
<dbReference type="GO" id="GO:0046166">
    <property type="term" value="P:glyceraldehyde-3-phosphate biosynthetic process"/>
    <property type="evidence" value="ECO:0007669"/>
    <property type="project" value="TreeGrafter"/>
</dbReference>
<dbReference type="GO" id="GO:0019563">
    <property type="term" value="P:glycerol catabolic process"/>
    <property type="evidence" value="ECO:0007669"/>
    <property type="project" value="TreeGrafter"/>
</dbReference>
<dbReference type="GO" id="GO:0006096">
    <property type="term" value="P:glycolytic process"/>
    <property type="evidence" value="ECO:0007669"/>
    <property type="project" value="UniProtKB-UniRule"/>
</dbReference>
<dbReference type="CDD" id="cd00311">
    <property type="entry name" value="TIM"/>
    <property type="match status" value="1"/>
</dbReference>
<dbReference type="FunFam" id="3.20.20.70:FF:000020">
    <property type="entry name" value="Triosephosphate isomerase"/>
    <property type="match status" value="1"/>
</dbReference>
<dbReference type="Gene3D" id="3.20.20.70">
    <property type="entry name" value="Aldolase class I"/>
    <property type="match status" value="1"/>
</dbReference>
<dbReference type="HAMAP" id="MF_00147_B">
    <property type="entry name" value="TIM_B"/>
    <property type="match status" value="1"/>
</dbReference>
<dbReference type="InterPro" id="IPR013785">
    <property type="entry name" value="Aldolase_TIM"/>
</dbReference>
<dbReference type="InterPro" id="IPR035990">
    <property type="entry name" value="TIM_sf"/>
</dbReference>
<dbReference type="InterPro" id="IPR022896">
    <property type="entry name" value="TrioseP_Isoase_bac/euk"/>
</dbReference>
<dbReference type="InterPro" id="IPR000652">
    <property type="entry name" value="Triosephosphate_isomerase"/>
</dbReference>
<dbReference type="InterPro" id="IPR020861">
    <property type="entry name" value="Triosephosphate_isomerase_AS"/>
</dbReference>
<dbReference type="NCBIfam" id="TIGR00419">
    <property type="entry name" value="tim"/>
    <property type="match status" value="1"/>
</dbReference>
<dbReference type="PANTHER" id="PTHR21139">
    <property type="entry name" value="TRIOSEPHOSPHATE ISOMERASE"/>
    <property type="match status" value="1"/>
</dbReference>
<dbReference type="PANTHER" id="PTHR21139:SF42">
    <property type="entry name" value="TRIOSEPHOSPHATE ISOMERASE"/>
    <property type="match status" value="1"/>
</dbReference>
<dbReference type="Pfam" id="PF00121">
    <property type="entry name" value="TIM"/>
    <property type="match status" value="1"/>
</dbReference>
<dbReference type="SUPFAM" id="SSF51351">
    <property type="entry name" value="Triosephosphate isomerase (TIM)"/>
    <property type="match status" value="1"/>
</dbReference>
<dbReference type="PROSITE" id="PS00171">
    <property type="entry name" value="TIM_1"/>
    <property type="match status" value="1"/>
</dbReference>
<dbReference type="PROSITE" id="PS51440">
    <property type="entry name" value="TIM_2"/>
    <property type="match status" value="1"/>
</dbReference>
<evidence type="ECO:0000255" key="1">
    <source>
        <dbReference type="HAMAP-Rule" id="MF_00147"/>
    </source>
</evidence>
<proteinExistence type="inferred from homology"/>